<proteinExistence type="inferred from homology"/>
<comment type="function">
    <text evidence="1">Component of the endosomal sorting complex required for transport II (ESCRT-II), which is required for multivesicular body (MVB) formation and sorting of endosomal cargo proteins into MVBs. The MVB pathway mediates delivery of transmembrane proteins into the lumen of the lysosome for degradation (By similarity).</text>
</comment>
<comment type="subunit">
    <text evidence="1">Component of the endosomal sorting complex required for transport II (ESCRT-II).</text>
</comment>
<comment type="subcellular location">
    <subcellularLocation>
        <location evidence="1">Cytoplasm</location>
    </subcellularLocation>
    <subcellularLocation>
        <location evidence="1">Endosome membrane</location>
        <topology evidence="1">Peripheral membrane protein</topology>
    </subcellularLocation>
</comment>
<comment type="similarity">
    <text evidence="3">Belongs to the SNF8 family.</text>
</comment>
<dbReference type="EMBL" id="AAFI02000051">
    <property type="protein sequence ID" value="EAL65840.1"/>
    <property type="molecule type" value="Genomic_DNA"/>
</dbReference>
<dbReference type="RefSeq" id="XP_639221.1">
    <property type="nucleotide sequence ID" value="XM_634129.1"/>
</dbReference>
<dbReference type="SMR" id="Q54RC4"/>
<dbReference type="FunCoup" id="Q54RC4">
    <property type="interactions" value="530"/>
</dbReference>
<dbReference type="STRING" id="44689.Q54RC4"/>
<dbReference type="PaxDb" id="44689-DDB0234025"/>
<dbReference type="EnsemblProtists" id="EAL65840">
    <property type="protein sequence ID" value="EAL65840"/>
    <property type="gene ID" value="DDB_G0283203"/>
</dbReference>
<dbReference type="GeneID" id="8623994"/>
<dbReference type="KEGG" id="ddi:DDB_G0283203"/>
<dbReference type="dictyBase" id="DDB_G0283203">
    <property type="gene designation" value="vps22"/>
</dbReference>
<dbReference type="VEuPathDB" id="AmoebaDB:DDB_G0283203"/>
<dbReference type="eggNOG" id="KOG3341">
    <property type="taxonomic scope" value="Eukaryota"/>
</dbReference>
<dbReference type="HOGENOM" id="CLU_070147_2_0_1"/>
<dbReference type="InParanoid" id="Q54RC4"/>
<dbReference type="OMA" id="QIVEVCM"/>
<dbReference type="PhylomeDB" id="Q54RC4"/>
<dbReference type="Reactome" id="R-DDI-917729">
    <property type="pathway name" value="Endosomal Sorting Complex Required For Transport (ESCRT)"/>
</dbReference>
<dbReference type="PRO" id="PR:Q54RC4"/>
<dbReference type="Proteomes" id="UP000002195">
    <property type="component" value="Chromosome 4"/>
</dbReference>
<dbReference type="GO" id="GO:0000814">
    <property type="term" value="C:ESCRT II complex"/>
    <property type="evidence" value="ECO:0000250"/>
    <property type="project" value="dictyBase"/>
</dbReference>
<dbReference type="GO" id="GO:0006605">
    <property type="term" value="P:protein targeting"/>
    <property type="evidence" value="ECO:0000250"/>
    <property type="project" value="dictyBase"/>
</dbReference>
<dbReference type="GO" id="GO:0043328">
    <property type="term" value="P:protein transport to vacuole involved in ubiquitin-dependent protein catabolic process via the multivesicular body sorting pathway"/>
    <property type="evidence" value="ECO:0000318"/>
    <property type="project" value="GO_Central"/>
</dbReference>
<dbReference type="FunFam" id="1.10.10.10:FF:000085">
    <property type="entry name" value="Vacuolar-sorting protein SNF8"/>
    <property type="match status" value="1"/>
</dbReference>
<dbReference type="FunFam" id="1.10.10.10:FF:000397">
    <property type="entry name" value="Vacuolar-sorting protein SNF8"/>
    <property type="match status" value="1"/>
</dbReference>
<dbReference type="Gene3D" id="6.10.140.180">
    <property type="match status" value="1"/>
</dbReference>
<dbReference type="Gene3D" id="1.10.10.10">
    <property type="entry name" value="Winged helix-like DNA-binding domain superfamily/Winged helix DNA-binding domain"/>
    <property type="match status" value="2"/>
</dbReference>
<dbReference type="InterPro" id="IPR016689">
    <property type="entry name" value="ESCRT-2_cplx_Snf8"/>
</dbReference>
<dbReference type="InterPro" id="IPR040608">
    <property type="entry name" value="Snf8/Vps36"/>
</dbReference>
<dbReference type="InterPro" id="IPR036388">
    <property type="entry name" value="WH-like_DNA-bd_sf"/>
</dbReference>
<dbReference type="InterPro" id="IPR036390">
    <property type="entry name" value="WH_DNA-bd_sf"/>
</dbReference>
<dbReference type="PANTHER" id="PTHR12806">
    <property type="entry name" value="EAP30 SUBUNIT OF ELL COMPLEX"/>
    <property type="match status" value="1"/>
</dbReference>
<dbReference type="PANTHER" id="PTHR12806:SF0">
    <property type="entry name" value="VACUOLAR-SORTING PROTEIN SNF8"/>
    <property type="match status" value="1"/>
</dbReference>
<dbReference type="Pfam" id="PF04157">
    <property type="entry name" value="EAP30"/>
    <property type="match status" value="1"/>
</dbReference>
<dbReference type="PIRSF" id="PIRSF017215">
    <property type="entry name" value="ESCRT2_Vps22"/>
    <property type="match status" value="1"/>
</dbReference>
<dbReference type="SUPFAM" id="SSF46785">
    <property type="entry name" value="Winged helix' DNA-binding domain"/>
    <property type="match status" value="2"/>
</dbReference>
<feature type="chain" id="PRO_0000367437" description="Vacuolar-sorting protein SNF8">
    <location>
        <begin position="1"/>
        <end position="246"/>
    </location>
</feature>
<feature type="coiled-coil region" evidence="2">
    <location>
        <begin position="8"/>
        <end position="34"/>
    </location>
</feature>
<organism>
    <name type="scientific">Dictyostelium discoideum</name>
    <name type="common">Social amoeba</name>
    <dbReference type="NCBI Taxonomy" id="44689"/>
    <lineage>
        <taxon>Eukaryota</taxon>
        <taxon>Amoebozoa</taxon>
        <taxon>Evosea</taxon>
        <taxon>Eumycetozoa</taxon>
        <taxon>Dictyostelia</taxon>
        <taxon>Dictyosteliales</taxon>
        <taxon>Dictyosteliaceae</taxon>
        <taxon>Dictyostelium</taxon>
    </lineage>
</organism>
<keyword id="KW-0175">Coiled coil</keyword>
<keyword id="KW-0963">Cytoplasm</keyword>
<keyword id="KW-0967">Endosome</keyword>
<keyword id="KW-0472">Membrane</keyword>
<keyword id="KW-0653">Protein transport</keyword>
<keyword id="KW-1185">Reference proteome</keyword>
<keyword id="KW-0813">Transport</keyword>
<accession>Q54RC4</accession>
<reference key="1">
    <citation type="journal article" date="2005" name="Nature">
        <title>The genome of the social amoeba Dictyostelium discoideum.</title>
        <authorList>
            <person name="Eichinger L."/>
            <person name="Pachebat J.A."/>
            <person name="Gloeckner G."/>
            <person name="Rajandream M.A."/>
            <person name="Sucgang R."/>
            <person name="Berriman M."/>
            <person name="Song J."/>
            <person name="Olsen R."/>
            <person name="Szafranski K."/>
            <person name="Xu Q."/>
            <person name="Tunggal B."/>
            <person name="Kummerfeld S."/>
            <person name="Madera M."/>
            <person name="Konfortov B.A."/>
            <person name="Rivero F."/>
            <person name="Bankier A.T."/>
            <person name="Lehmann R."/>
            <person name="Hamlin N."/>
            <person name="Davies R."/>
            <person name="Gaudet P."/>
            <person name="Fey P."/>
            <person name="Pilcher K."/>
            <person name="Chen G."/>
            <person name="Saunders D."/>
            <person name="Sodergren E.J."/>
            <person name="Davis P."/>
            <person name="Kerhornou A."/>
            <person name="Nie X."/>
            <person name="Hall N."/>
            <person name="Anjard C."/>
            <person name="Hemphill L."/>
            <person name="Bason N."/>
            <person name="Farbrother P."/>
            <person name="Desany B."/>
            <person name="Just E."/>
            <person name="Morio T."/>
            <person name="Rost R."/>
            <person name="Churcher C.M."/>
            <person name="Cooper J."/>
            <person name="Haydock S."/>
            <person name="van Driessche N."/>
            <person name="Cronin A."/>
            <person name="Goodhead I."/>
            <person name="Muzny D.M."/>
            <person name="Mourier T."/>
            <person name="Pain A."/>
            <person name="Lu M."/>
            <person name="Harper D."/>
            <person name="Lindsay R."/>
            <person name="Hauser H."/>
            <person name="James K.D."/>
            <person name="Quiles M."/>
            <person name="Madan Babu M."/>
            <person name="Saito T."/>
            <person name="Buchrieser C."/>
            <person name="Wardroper A."/>
            <person name="Felder M."/>
            <person name="Thangavelu M."/>
            <person name="Johnson D."/>
            <person name="Knights A."/>
            <person name="Loulseged H."/>
            <person name="Mungall K.L."/>
            <person name="Oliver K."/>
            <person name="Price C."/>
            <person name="Quail M.A."/>
            <person name="Urushihara H."/>
            <person name="Hernandez J."/>
            <person name="Rabbinowitsch E."/>
            <person name="Steffen D."/>
            <person name="Sanders M."/>
            <person name="Ma J."/>
            <person name="Kohara Y."/>
            <person name="Sharp S."/>
            <person name="Simmonds M.N."/>
            <person name="Spiegler S."/>
            <person name="Tivey A."/>
            <person name="Sugano S."/>
            <person name="White B."/>
            <person name="Walker D."/>
            <person name="Woodward J.R."/>
            <person name="Winckler T."/>
            <person name="Tanaka Y."/>
            <person name="Shaulsky G."/>
            <person name="Schleicher M."/>
            <person name="Weinstock G.M."/>
            <person name="Rosenthal A."/>
            <person name="Cox E.C."/>
            <person name="Chisholm R.L."/>
            <person name="Gibbs R.A."/>
            <person name="Loomis W.F."/>
            <person name="Platzer M."/>
            <person name="Kay R.R."/>
            <person name="Williams J.G."/>
            <person name="Dear P.H."/>
            <person name="Noegel A.A."/>
            <person name="Barrell B.G."/>
            <person name="Kuspa A."/>
        </authorList>
    </citation>
    <scope>NUCLEOTIDE SEQUENCE [LARGE SCALE GENOMIC DNA]</scope>
    <source>
        <strain>AX4</strain>
    </source>
</reference>
<name>SNF8_DICDI</name>
<evidence type="ECO:0000250" key="1"/>
<evidence type="ECO:0000255" key="2"/>
<evidence type="ECO:0000305" key="3"/>
<protein>
    <recommendedName>
        <fullName>Vacuolar-sorting protein SNF8</fullName>
    </recommendedName>
    <alternativeName>
        <fullName>ESCRT-II complex subunit VPS22</fullName>
    </alternativeName>
    <alternativeName>
        <fullName>Vacuolar protein-sorting-associated protein 22</fullName>
    </alternativeName>
</protein>
<sequence>MRRGIGIQAAQKQTQTQKQLQNVSEQLNTENINKIKEQLLVFKENLEIFATKHKKDIIKNPEFRKYFQDMCNMIGVDPLASNKGFWCQVLGVGDFYYTLGVQIIEICLKYRSSNGGLMEMDTLAEHLRKLRGKNSQEISCDDIECSISKLKVLGNGFNIIKVSGGKKLVQSVPCELNKDHTDIIILAQDNNASITQSLVISKLKWSEERINNVINFLLQESMIWIDEQSNETIYWFPSLWSNFSFE</sequence>
<gene>
    <name type="primary">snf8</name>
    <name type="synonym">vps22</name>
    <name type="ORF">DDB_G0283203</name>
</gene>